<reference key="1">
    <citation type="journal article" date="2006" name="PLoS Genet.">
        <title>Comparative genomics of emerging human ehrlichiosis agents.</title>
        <authorList>
            <person name="Dunning Hotopp J.C."/>
            <person name="Lin M."/>
            <person name="Madupu R."/>
            <person name="Crabtree J."/>
            <person name="Angiuoli S.V."/>
            <person name="Eisen J.A."/>
            <person name="Seshadri R."/>
            <person name="Ren Q."/>
            <person name="Wu M."/>
            <person name="Utterback T.R."/>
            <person name="Smith S."/>
            <person name="Lewis M."/>
            <person name="Khouri H."/>
            <person name="Zhang C."/>
            <person name="Niu H."/>
            <person name="Lin Q."/>
            <person name="Ohashi N."/>
            <person name="Zhi N."/>
            <person name="Nelson W.C."/>
            <person name="Brinkac L.M."/>
            <person name="Dodson R.J."/>
            <person name="Rosovitz M.J."/>
            <person name="Sundaram J.P."/>
            <person name="Daugherty S.C."/>
            <person name="Davidsen T."/>
            <person name="Durkin A.S."/>
            <person name="Gwinn M.L."/>
            <person name="Haft D.H."/>
            <person name="Selengut J.D."/>
            <person name="Sullivan S.A."/>
            <person name="Zafar N."/>
            <person name="Zhou L."/>
            <person name="Benahmed F."/>
            <person name="Forberger H."/>
            <person name="Halpin R."/>
            <person name="Mulligan S."/>
            <person name="Robinson J."/>
            <person name="White O."/>
            <person name="Rikihisa Y."/>
            <person name="Tettelin H."/>
        </authorList>
    </citation>
    <scope>NUCLEOTIDE SEQUENCE [LARGE SCALE GENOMIC DNA]</scope>
    <source>
        <strain>ATCC VR-367 / Miyayama</strain>
    </source>
</reference>
<proteinExistence type="inferred from homology"/>
<evidence type="ECO:0000255" key="1">
    <source>
        <dbReference type="HAMAP-Rule" id="MF_01043"/>
    </source>
</evidence>
<comment type="function">
    <text evidence="1">Catalyzes the transfer of an acyl group from acyl-phosphate (acyl-PO(4)) to glycerol-3-phosphate (G3P) to form lysophosphatidic acid (LPA). This enzyme utilizes acyl-phosphate as fatty acyl donor, but not acyl-CoA or acyl-ACP.</text>
</comment>
<comment type="catalytic activity">
    <reaction evidence="1">
        <text>an acyl phosphate + sn-glycerol 3-phosphate = a 1-acyl-sn-glycero-3-phosphate + phosphate</text>
        <dbReference type="Rhea" id="RHEA:34075"/>
        <dbReference type="ChEBI" id="CHEBI:43474"/>
        <dbReference type="ChEBI" id="CHEBI:57597"/>
        <dbReference type="ChEBI" id="CHEBI:57970"/>
        <dbReference type="ChEBI" id="CHEBI:59918"/>
        <dbReference type="EC" id="2.3.1.275"/>
    </reaction>
</comment>
<comment type="pathway">
    <text evidence="1">Lipid metabolism; phospholipid metabolism.</text>
</comment>
<comment type="subunit">
    <text evidence="1">Probably interacts with PlsX.</text>
</comment>
<comment type="subcellular location">
    <subcellularLocation>
        <location evidence="1">Cell inner membrane</location>
        <topology evidence="1">Multi-pass membrane protein</topology>
    </subcellularLocation>
</comment>
<comment type="similarity">
    <text evidence="1">Belongs to the PlsY family.</text>
</comment>
<feature type="chain" id="PRO_0000250314" description="Glycerol-3-phosphate acyltransferase">
    <location>
        <begin position="1"/>
        <end position="191"/>
    </location>
</feature>
<feature type="transmembrane region" description="Helical" evidence="1">
    <location>
        <begin position="10"/>
        <end position="30"/>
    </location>
</feature>
<feature type="transmembrane region" description="Helical" evidence="1">
    <location>
        <begin position="57"/>
        <end position="77"/>
    </location>
</feature>
<feature type="transmembrane region" description="Helical" evidence="1">
    <location>
        <begin position="84"/>
        <end position="104"/>
    </location>
</feature>
<feature type="transmembrane region" description="Helical" evidence="1">
    <location>
        <begin position="118"/>
        <end position="138"/>
    </location>
</feature>
<feature type="transmembrane region" description="Helical" evidence="1">
    <location>
        <begin position="158"/>
        <end position="178"/>
    </location>
</feature>
<accession>Q2GD32</accession>
<protein>
    <recommendedName>
        <fullName evidence="1">Glycerol-3-phosphate acyltransferase</fullName>
    </recommendedName>
    <alternativeName>
        <fullName evidence="1">Acyl-PO4 G3P acyltransferase</fullName>
    </alternativeName>
    <alternativeName>
        <fullName evidence="1">Acyl-phosphate--glycerol-3-phosphate acyltransferase</fullName>
    </alternativeName>
    <alternativeName>
        <fullName evidence="1">G3P acyltransferase</fullName>
        <shortName evidence="1">GPAT</shortName>
        <ecNumber evidence="1">2.3.1.275</ecNumber>
    </alternativeName>
    <alternativeName>
        <fullName evidence="1">Lysophosphatidic acid synthase</fullName>
        <shortName evidence="1">LPA synthase</shortName>
    </alternativeName>
</protein>
<organism>
    <name type="scientific">Neorickettsia sennetsu (strain ATCC VR-367 / Miyayama)</name>
    <name type="common">Ehrlichia sennetsu</name>
    <dbReference type="NCBI Taxonomy" id="222891"/>
    <lineage>
        <taxon>Bacteria</taxon>
        <taxon>Pseudomonadati</taxon>
        <taxon>Pseudomonadota</taxon>
        <taxon>Alphaproteobacteria</taxon>
        <taxon>Rickettsiales</taxon>
        <taxon>Anaplasmataceae</taxon>
        <taxon>Neorickettsia</taxon>
    </lineage>
</organism>
<sequence>MASAFEMNRLAFIIFVYVIAAIPFGRCISACFGVDICTRGSGNIGATNMTRVMGLGFGSVVFMLDFLKAAAPVFLAVQCCSDVFASTVGFVAVFAHVFSVYMAFKGGKGVAPMMGVYFVLVLPVFIVAVCTWGIFFVLFRQPFISSLIACFIGAVYSYALLELYVFLPILAGTVLIFIRHTSNVREFLQAR</sequence>
<gene>
    <name evidence="1" type="primary">plsY</name>
    <name type="ordered locus">NSE_0738</name>
</gene>
<name>PLSY_NEOSM</name>
<keyword id="KW-0997">Cell inner membrane</keyword>
<keyword id="KW-1003">Cell membrane</keyword>
<keyword id="KW-0444">Lipid biosynthesis</keyword>
<keyword id="KW-0443">Lipid metabolism</keyword>
<keyword id="KW-0472">Membrane</keyword>
<keyword id="KW-0594">Phospholipid biosynthesis</keyword>
<keyword id="KW-1208">Phospholipid metabolism</keyword>
<keyword id="KW-0808">Transferase</keyword>
<keyword id="KW-0812">Transmembrane</keyword>
<keyword id="KW-1133">Transmembrane helix</keyword>
<dbReference type="EC" id="2.3.1.275" evidence="1"/>
<dbReference type="EMBL" id="CP000237">
    <property type="protein sequence ID" value="ABD45799.1"/>
    <property type="molecule type" value="Genomic_DNA"/>
</dbReference>
<dbReference type="RefSeq" id="WP_011452120.1">
    <property type="nucleotide sequence ID" value="NC_007798.1"/>
</dbReference>
<dbReference type="SMR" id="Q2GD32"/>
<dbReference type="STRING" id="222891.NSE_0738"/>
<dbReference type="KEGG" id="nse:NSE_0738"/>
<dbReference type="eggNOG" id="COG0344">
    <property type="taxonomic scope" value="Bacteria"/>
</dbReference>
<dbReference type="HOGENOM" id="CLU_081254_4_0_5"/>
<dbReference type="OrthoDB" id="9777124at2"/>
<dbReference type="UniPathway" id="UPA00085"/>
<dbReference type="Proteomes" id="UP000001942">
    <property type="component" value="Chromosome"/>
</dbReference>
<dbReference type="GO" id="GO:0005886">
    <property type="term" value="C:plasma membrane"/>
    <property type="evidence" value="ECO:0007669"/>
    <property type="project" value="UniProtKB-SubCell"/>
</dbReference>
<dbReference type="GO" id="GO:0043772">
    <property type="term" value="F:acyl-phosphate glycerol-3-phosphate acyltransferase activity"/>
    <property type="evidence" value="ECO:0007669"/>
    <property type="project" value="UniProtKB-UniRule"/>
</dbReference>
<dbReference type="GO" id="GO:0008654">
    <property type="term" value="P:phospholipid biosynthetic process"/>
    <property type="evidence" value="ECO:0007669"/>
    <property type="project" value="UniProtKB-UniRule"/>
</dbReference>
<dbReference type="HAMAP" id="MF_01043">
    <property type="entry name" value="PlsY"/>
    <property type="match status" value="1"/>
</dbReference>
<dbReference type="InterPro" id="IPR003811">
    <property type="entry name" value="G3P_acylTferase_PlsY"/>
</dbReference>
<dbReference type="PANTHER" id="PTHR30309:SF0">
    <property type="entry name" value="GLYCEROL-3-PHOSPHATE ACYLTRANSFERASE-RELATED"/>
    <property type="match status" value="1"/>
</dbReference>
<dbReference type="PANTHER" id="PTHR30309">
    <property type="entry name" value="INNER MEMBRANE PROTEIN YGIH"/>
    <property type="match status" value="1"/>
</dbReference>
<dbReference type="Pfam" id="PF02660">
    <property type="entry name" value="G3P_acyltransf"/>
    <property type="match status" value="1"/>
</dbReference>
<dbReference type="SMART" id="SM01207">
    <property type="entry name" value="G3P_acyltransf"/>
    <property type="match status" value="1"/>
</dbReference>